<dbReference type="EMBL" id="EU439053">
    <property type="protein sequence ID" value="ABZ85632.1"/>
    <property type="molecule type" value="mRNA"/>
</dbReference>
<dbReference type="SMR" id="B1ABS0"/>
<dbReference type="IntAct" id="B1ABS0">
    <property type="interactions" value="1"/>
</dbReference>
<dbReference type="GO" id="GO:0000785">
    <property type="term" value="C:chromatin"/>
    <property type="evidence" value="ECO:0007669"/>
    <property type="project" value="TreeGrafter"/>
</dbReference>
<dbReference type="GO" id="GO:0005634">
    <property type="term" value="C:nucleus"/>
    <property type="evidence" value="ECO:0007669"/>
    <property type="project" value="UniProtKB-SubCell"/>
</dbReference>
<dbReference type="GO" id="GO:0005667">
    <property type="term" value="C:transcription regulator complex"/>
    <property type="evidence" value="ECO:0007669"/>
    <property type="project" value="TreeGrafter"/>
</dbReference>
<dbReference type="GO" id="GO:0000977">
    <property type="term" value="F:RNA polymerase II transcription regulatory region sequence-specific DNA binding"/>
    <property type="evidence" value="ECO:0007669"/>
    <property type="project" value="TreeGrafter"/>
</dbReference>
<dbReference type="GO" id="GO:0030154">
    <property type="term" value="P:cell differentiation"/>
    <property type="evidence" value="ECO:0007669"/>
    <property type="project" value="TreeGrafter"/>
</dbReference>
<dbReference type="GO" id="GO:2000134">
    <property type="term" value="P:negative regulation of G1/S transition of mitotic cell cycle"/>
    <property type="evidence" value="ECO:0007669"/>
    <property type="project" value="TreeGrafter"/>
</dbReference>
<dbReference type="GO" id="GO:0006357">
    <property type="term" value="P:regulation of transcription by RNA polymerase II"/>
    <property type="evidence" value="ECO:0007669"/>
    <property type="project" value="InterPro"/>
</dbReference>
<dbReference type="FunFam" id="1.10.472.10:FF:000030">
    <property type="entry name" value="Retinoblastoma-related protein 1"/>
    <property type="match status" value="1"/>
</dbReference>
<dbReference type="FunFam" id="1.10.472.10:FF:000067">
    <property type="entry name" value="Retinoblastoma-related protein 1"/>
    <property type="match status" value="1"/>
</dbReference>
<dbReference type="FunFam" id="1.10.472.140:FF:000003">
    <property type="entry name" value="Retinoblastoma-related protein 1"/>
    <property type="match status" value="1"/>
</dbReference>
<dbReference type="Gene3D" id="1.10.472.140">
    <property type="match status" value="1"/>
</dbReference>
<dbReference type="Gene3D" id="1.10.472.10">
    <property type="entry name" value="Cyclin-like"/>
    <property type="match status" value="2"/>
</dbReference>
<dbReference type="InterPro" id="IPR036915">
    <property type="entry name" value="Cyclin-like_sf"/>
</dbReference>
<dbReference type="InterPro" id="IPR002720">
    <property type="entry name" value="RB_A"/>
</dbReference>
<dbReference type="InterPro" id="IPR002719">
    <property type="entry name" value="RB_B"/>
</dbReference>
<dbReference type="InterPro" id="IPR028309">
    <property type="entry name" value="RB_fam"/>
</dbReference>
<dbReference type="InterPro" id="IPR024599">
    <property type="entry name" value="RB_N"/>
</dbReference>
<dbReference type="PANTHER" id="PTHR13742:SF17">
    <property type="entry name" value="RE32990P-RELATED"/>
    <property type="match status" value="1"/>
</dbReference>
<dbReference type="PANTHER" id="PTHR13742">
    <property type="entry name" value="RETINOBLASTOMA-ASSOCIATED PROTEIN RB -RELATED"/>
    <property type="match status" value="1"/>
</dbReference>
<dbReference type="Pfam" id="PF11934">
    <property type="entry name" value="DUF3452"/>
    <property type="match status" value="1"/>
</dbReference>
<dbReference type="Pfam" id="PF01858">
    <property type="entry name" value="RB_A"/>
    <property type="match status" value="1"/>
</dbReference>
<dbReference type="Pfam" id="PF01857">
    <property type="entry name" value="RB_B"/>
    <property type="match status" value="1"/>
</dbReference>
<dbReference type="SMART" id="SM01367">
    <property type="entry name" value="DUF3452"/>
    <property type="match status" value="1"/>
</dbReference>
<dbReference type="SMART" id="SM01368">
    <property type="entry name" value="RB_A"/>
    <property type="match status" value="1"/>
</dbReference>
<dbReference type="SUPFAM" id="SSF47954">
    <property type="entry name" value="Cyclin-like"/>
    <property type="match status" value="2"/>
</dbReference>
<protein>
    <recommendedName>
        <fullName>Retinoblastoma-related protein</fullName>
    </recommendedName>
</protein>
<evidence type="ECO:0000250" key="1"/>
<evidence type="ECO:0000256" key="2">
    <source>
        <dbReference type="SAM" id="MobiDB-lite"/>
    </source>
</evidence>
<evidence type="ECO:0000305" key="3"/>
<accession>B1ABS0</accession>
<comment type="function">
    <text evidence="1">Regulator of biological processes that recruits a histone deacetylase to control gene transcription. May play a role in the entry into mitosis, negatively regulating the cell proliferation. Formation of stable complexes with geminiviridae replication-associated proteins may create a cellular environment which favors viral DNA replication (By similarity).</text>
</comment>
<comment type="subcellular location">
    <subcellularLocation>
        <location evidence="1">Nucleus</location>
    </subcellularLocation>
</comment>
<comment type="similarity">
    <text evidence="3">Belongs to the retinoblastoma protein (RB) family.</text>
</comment>
<keyword id="KW-0131">Cell cycle</keyword>
<keyword id="KW-0539">Nucleus</keyword>
<keyword id="KW-0678">Repressor</keyword>
<keyword id="KW-0804">Transcription</keyword>
<keyword id="KW-0805">Transcription regulation</keyword>
<name>RBR_PILOF</name>
<feature type="chain" id="PRO_0000380234" description="Retinoblastoma-related protein">
    <location>
        <begin position="1"/>
        <end position="1008"/>
    </location>
</feature>
<feature type="region of interest" description="Disordered" evidence="2">
    <location>
        <begin position="375"/>
        <end position="394"/>
    </location>
</feature>
<feature type="region of interest" description="Pocket" evidence="1">
    <location>
        <begin position="404"/>
        <end position="853"/>
    </location>
</feature>
<feature type="region of interest" description="Domain A" evidence="1">
    <location>
        <begin position="404"/>
        <end position="605"/>
    </location>
</feature>
<feature type="region of interest" description="Spacer" evidence="1">
    <location>
        <begin position="606"/>
        <end position="722"/>
    </location>
</feature>
<feature type="region of interest" description="Domain B" evidence="1">
    <location>
        <begin position="723"/>
        <end position="853"/>
    </location>
</feature>
<feature type="region of interest" description="Disordered" evidence="2">
    <location>
        <begin position="865"/>
        <end position="899"/>
    </location>
</feature>
<feature type="region of interest" description="Disordered" evidence="2">
    <location>
        <begin position="988"/>
        <end position="1008"/>
    </location>
</feature>
<feature type="compositionally biased region" description="Polar residues" evidence="2">
    <location>
        <begin position="380"/>
        <end position="392"/>
    </location>
</feature>
<proteinExistence type="evidence at transcript level"/>
<gene>
    <name type="primary">RBR</name>
</gene>
<reference key="1">
    <citation type="journal article" date="2008" name="Plant Cell">
        <title>Sexual and apomictic seed formation in Hieracium requires the plant polycomb-group gene FERTILIZATION INDEPENDENT ENDOSPERM.</title>
        <authorList>
            <person name="Rodrigues J.C.M."/>
            <person name="Tucker M.R."/>
            <person name="Johnson S.D."/>
            <person name="Hrmova M."/>
            <person name="Koltunow A.M.G."/>
        </authorList>
    </citation>
    <scope>NUCLEOTIDE SEQUENCE [MRNA]</scope>
    <source>
        <strain>cv. P4</strain>
    </source>
</reference>
<organism>
    <name type="scientific">Pilosella officinarum</name>
    <name type="common">Mouse-ear hawkweed</name>
    <name type="synonym">Hieracium pilosella</name>
    <dbReference type="NCBI Taxonomy" id="221204"/>
    <lineage>
        <taxon>Eukaryota</taxon>
        <taxon>Viridiplantae</taxon>
        <taxon>Streptophyta</taxon>
        <taxon>Embryophyta</taxon>
        <taxon>Tracheophyta</taxon>
        <taxon>Spermatophyta</taxon>
        <taxon>Magnoliopsida</taxon>
        <taxon>eudicotyledons</taxon>
        <taxon>Gunneridae</taxon>
        <taxon>Pentapetalae</taxon>
        <taxon>asterids</taxon>
        <taxon>campanulids</taxon>
        <taxon>Asterales</taxon>
        <taxon>Asteraceae</taxon>
        <taxon>Cichorioideae</taxon>
        <taxon>Cichorieae</taxon>
        <taxon>Hieraciinae</taxon>
        <taxon>Pilosella</taxon>
    </lineage>
</organism>
<sequence>MEDLQPINPNTDSPTETGATTIEARFSDFCKGRLTMDDNALEEAMKLFNQSKHLFMTNASALGSGTPEEAEHYWFAFILFSMKRLSKKNDGEDAAKSSENSFKLYQILRVAKLNFVDFFKELPQFIVKTGPILSNLYGSDWETRLQAKELQANFVHLSLLSKFYKRAFKTLFKATHENVEGQSAVANSADYISNCHRFGWMLFLALRVHAFSRFKDLVTCTNGLVSILAILIIHIPARFRNFSMSDSSRFVKKDDKVVDLLASLCNMYETSEDELRKTVVRTNIVVEEILKKDPSMASECTNGNLDNIDTDDLTYFQDLLEEQSLSSDLDVLEKDYDDAMLLEGELDERLFINDEESLLGSSSLSGGAINMTGTKRKVDSMTSPTKTITSPLSPYKSPSKMISTPVSTAMTTAKWLRTVVSPLSSFPSVDLTRFLQSCDKDVTSDVIKRARIILEAIFPSSGIPDRTIISNTQTTNLMDNIWAEQRRLEALKLYYRVLHAMCKAESQILHGNNLTSLLTNERFHRCMLACSAELVLATHKTVTMLFPAVLERTGITAFDLSKVIESFIRHEEPLPRELRRHLNSLEERLLESMVWEKGSSMYNSLTIARPNLSNEINRLGLLADPMPSLDAIALQCNMSCGGLPPVPKRDTSPGKSGEIRSPKRVCNEYRSVLVERNSFTSPVKDRLLGINNLKSKILSPALQSAFASPTRPHPTRGETCGETAVNLFFSKIVKLAAVRINGMVERMQLTQQIRERVYCLFQQILGQRTSLFFNRHIDQIILCCFYGVAKISQLSLTFKEIIFNYRKQPHCKPQVFRAVFVDDRSSSRRSKTGQDHVDIIMFYNEVFIPSVKPLLVELAPSNVPKNPNNQVSDSNKKDESGPCPCPGSPKVSSFPSLPDMSPKKVSAVHNVYVSPLRSTKMDALISHGSKSYYACVGESTHAYQSPSKDLTAINNRLNGTRKVRGSLNFDEVDVGLVSDSLVTQSLYLQNGQNGKGPSSSSGQELKTE</sequence>